<feature type="chain" id="PRO_0000159679" description="Endonuclease V">
    <location>
        <begin position="1"/>
        <end position="239"/>
    </location>
</feature>
<feature type="binding site" evidence="1">
    <location>
        <position position="50"/>
    </location>
    <ligand>
        <name>Mg(2+)</name>
        <dbReference type="ChEBI" id="CHEBI:18420"/>
    </ligand>
</feature>
<feature type="binding site" evidence="1">
    <location>
        <position position="118"/>
    </location>
    <ligand>
        <name>Mg(2+)</name>
        <dbReference type="ChEBI" id="CHEBI:18420"/>
    </ligand>
</feature>
<feature type="site" description="Interaction with target DNA" evidence="1">
    <location>
        <position position="88"/>
    </location>
</feature>
<proteinExistence type="inferred from homology"/>
<protein>
    <recommendedName>
        <fullName evidence="1">Endonuclease V</fullName>
        <ecNumber evidence="1">3.1.21.7</ecNumber>
    </recommendedName>
    <alternativeName>
        <fullName evidence="1">Deoxyinosine 3'endonuclease</fullName>
    </alternativeName>
    <alternativeName>
        <fullName evidence="1">Deoxyribonuclease V</fullName>
        <shortName evidence="1">DNase V</shortName>
    </alternativeName>
</protein>
<evidence type="ECO:0000255" key="1">
    <source>
        <dbReference type="HAMAP-Rule" id="MF_00801"/>
    </source>
</evidence>
<evidence type="ECO:0000305" key="2"/>
<accession>Q9PC89</accession>
<organism>
    <name type="scientific">Xylella fastidiosa (strain 9a5c)</name>
    <dbReference type="NCBI Taxonomy" id="160492"/>
    <lineage>
        <taxon>Bacteria</taxon>
        <taxon>Pseudomonadati</taxon>
        <taxon>Pseudomonadota</taxon>
        <taxon>Gammaproteobacteria</taxon>
        <taxon>Lysobacterales</taxon>
        <taxon>Lysobacteraceae</taxon>
        <taxon>Xylella</taxon>
    </lineage>
</organism>
<reference key="1">
    <citation type="journal article" date="2000" name="Nature">
        <title>The genome sequence of the plant pathogen Xylella fastidiosa.</title>
        <authorList>
            <person name="Simpson A.J.G."/>
            <person name="Reinach F.C."/>
            <person name="Arruda P."/>
            <person name="Abreu F.A."/>
            <person name="Acencio M."/>
            <person name="Alvarenga R."/>
            <person name="Alves L.M.C."/>
            <person name="Araya J.E."/>
            <person name="Baia G.S."/>
            <person name="Baptista C.S."/>
            <person name="Barros M.H."/>
            <person name="Bonaccorsi E.D."/>
            <person name="Bordin S."/>
            <person name="Bove J.M."/>
            <person name="Briones M.R.S."/>
            <person name="Bueno M.R.P."/>
            <person name="Camargo A.A."/>
            <person name="Camargo L.E.A."/>
            <person name="Carraro D.M."/>
            <person name="Carrer H."/>
            <person name="Colauto N.B."/>
            <person name="Colombo C."/>
            <person name="Costa F.F."/>
            <person name="Costa M.C.R."/>
            <person name="Costa-Neto C.M."/>
            <person name="Coutinho L.L."/>
            <person name="Cristofani M."/>
            <person name="Dias-Neto E."/>
            <person name="Docena C."/>
            <person name="El-Dorry H."/>
            <person name="Facincani A.P."/>
            <person name="Ferreira A.J.S."/>
            <person name="Ferreira V.C.A."/>
            <person name="Ferro J.A."/>
            <person name="Fraga J.S."/>
            <person name="Franca S.C."/>
            <person name="Franco M.C."/>
            <person name="Frohme M."/>
            <person name="Furlan L.R."/>
            <person name="Garnier M."/>
            <person name="Goldman G.H."/>
            <person name="Goldman M.H.S."/>
            <person name="Gomes S.L."/>
            <person name="Gruber A."/>
            <person name="Ho P.L."/>
            <person name="Hoheisel J.D."/>
            <person name="Junqueira M.L."/>
            <person name="Kemper E.L."/>
            <person name="Kitajima J.P."/>
            <person name="Krieger J.E."/>
            <person name="Kuramae E.E."/>
            <person name="Laigret F."/>
            <person name="Lambais M.R."/>
            <person name="Leite L.C.C."/>
            <person name="Lemos E.G.M."/>
            <person name="Lemos M.V.F."/>
            <person name="Lopes S.A."/>
            <person name="Lopes C.R."/>
            <person name="Machado J.A."/>
            <person name="Machado M.A."/>
            <person name="Madeira A.M.B.N."/>
            <person name="Madeira H.M.F."/>
            <person name="Marino C.L."/>
            <person name="Marques M.V."/>
            <person name="Martins E.A.L."/>
            <person name="Martins E.M.F."/>
            <person name="Matsukuma A.Y."/>
            <person name="Menck C.F.M."/>
            <person name="Miracca E.C."/>
            <person name="Miyaki C.Y."/>
            <person name="Monteiro-Vitorello C.B."/>
            <person name="Moon D.H."/>
            <person name="Nagai M.A."/>
            <person name="Nascimento A.L.T.O."/>
            <person name="Netto L.E.S."/>
            <person name="Nhani A. Jr."/>
            <person name="Nobrega F.G."/>
            <person name="Nunes L.R."/>
            <person name="Oliveira M.A."/>
            <person name="de Oliveira M.C."/>
            <person name="de Oliveira R.C."/>
            <person name="Palmieri D.A."/>
            <person name="Paris A."/>
            <person name="Peixoto B.R."/>
            <person name="Pereira G.A.G."/>
            <person name="Pereira H.A. Jr."/>
            <person name="Pesquero J.B."/>
            <person name="Quaggio R.B."/>
            <person name="Roberto P.G."/>
            <person name="Rodrigues V."/>
            <person name="de Rosa A.J.M."/>
            <person name="de Rosa V.E. Jr."/>
            <person name="de Sa R.G."/>
            <person name="Santelli R.V."/>
            <person name="Sawasaki H.E."/>
            <person name="da Silva A.C.R."/>
            <person name="da Silva A.M."/>
            <person name="da Silva F.R."/>
            <person name="Silva W.A. Jr."/>
            <person name="da Silveira J.F."/>
            <person name="Silvestri M.L.Z."/>
            <person name="Siqueira W.J."/>
            <person name="de Souza A.A."/>
            <person name="de Souza A.P."/>
            <person name="Terenzi M.F."/>
            <person name="Truffi D."/>
            <person name="Tsai S.M."/>
            <person name="Tsuhako M.H."/>
            <person name="Vallada H."/>
            <person name="Van Sluys M.A."/>
            <person name="Verjovski-Almeida S."/>
            <person name="Vettore A.L."/>
            <person name="Zago M.A."/>
            <person name="Zatz M."/>
            <person name="Meidanis J."/>
            <person name="Setubal J.C."/>
        </authorList>
    </citation>
    <scope>NUCLEOTIDE SEQUENCE [LARGE SCALE GENOMIC DNA]</scope>
    <source>
        <strain>9a5c</strain>
    </source>
</reference>
<name>NFI_XYLFA</name>
<comment type="function">
    <text evidence="1">DNA repair enzyme involved in the repair of deaminated bases. Selectively cleaves double-stranded DNA at the second phosphodiester bond 3' to a deoxyinosine leaving behind the intact lesion on the nicked DNA.</text>
</comment>
<comment type="catalytic activity">
    <reaction evidence="1">
        <text>Endonucleolytic cleavage at apurinic or apyrimidinic sites to products with a 5'-phosphate.</text>
        <dbReference type="EC" id="3.1.21.7"/>
    </reaction>
</comment>
<comment type="cofactor">
    <cofactor evidence="1">
        <name>Mg(2+)</name>
        <dbReference type="ChEBI" id="CHEBI:18420"/>
    </cofactor>
</comment>
<comment type="subcellular location">
    <subcellularLocation>
        <location evidence="1">Cytoplasm</location>
    </subcellularLocation>
</comment>
<comment type="similarity">
    <text evidence="1">Belongs to the endonuclease V family.</text>
</comment>
<comment type="sequence caution" evidence="2">
    <conflict type="erroneous initiation">
        <sequence resource="EMBL-CDS" id="AAF84698"/>
    </conflict>
</comment>
<gene>
    <name evidence="1" type="primary">nfi</name>
    <name type="ordered locus">XF_1892</name>
</gene>
<sequence length="239" mass="26196">MKISSIDSIFAGWDGSITEARRLQSDMAERIVLKDDLNLLSEPTLLAGFDVGFEDEGRTTRAAAVLMNACDLKLLETHVVRVPTSMPYVPGLLSFRELPALLQALTQLSRIPALVFVDGHGIAHPRRLGIAAHFGLVTNLPCIGVAKKRLVGDFVEPGTAFGEHTPILLHGTQVGWALRSKIRCKPLMISPGHKISLHSALTWTQRCLNGYRLPEPTRQADRLASRRGQKIVSDLPSLL</sequence>
<dbReference type="EC" id="3.1.21.7" evidence="1"/>
<dbReference type="EMBL" id="AE003849">
    <property type="protein sequence ID" value="AAF84698.1"/>
    <property type="status" value="ALT_INIT"/>
    <property type="molecule type" value="Genomic_DNA"/>
</dbReference>
<dbReference type="PIR" id="A82625">
    <property type="entry name" value="A82625"/>
</dbReference>
<dbReference type="SMR" id="Q9PC89"/>
<dbReference type="STRING" id="160492.XF_1892"/>
<dbReference type="KEGG" id="xfa:XF_1892"/>
<dbReference type="eggNOG" id="COG1515">
    <property type="taxonomic scope" value="Bacteria"/>
</dbReference>
<dbReference type="HOGENOM" id="CLU_047631_1_0_6"/>
<dbReference type="Proteomes" id="UP000000812">
    <property type="component" value="Chromosome"/>
</dbReference>
<dbReference type="GO" id="GO:0005737">
    <property type="term" value="C:cytoplasm"/>
    <property type="evidence" value="ECO:0007669"/>
    <property type="project" value="UniProtKB-SubCell"/>
</dbReference>
<dbReference type="GO" id="GO:0043737">
    <property type="term" value="F:deoxyribonuclease V activity"/>
    <property type="evidence" value="ECO:0007669"/>
    <property type="project" value="UniProtKB-UniRule"/>
</dbReference>
<dbReference type="GO" id="GO:0000287">
    <property type="term" value="F:magnesium ion binding"/>
    <property type="evidence" value="ECO:0007669"/>
    <property type="project" value="UniProtKB-UniRule"/>
</dbReference>
<dbReference type="GO" id="GO:0016891">
    <property type="term" value="F:RNA endonuclease activity, producing 5'-phosphomonoesters"/>
    <property type="evidence" value="ECO:0007669"/>
    <property type="project" value="TreeGrafter"/>
</dbReference>
<dbReference type="GO" id="GO:0003727">
    <property type="term" value="F:single-stranded RNA binding"/>
    <property type="evidence" value="ECO:0007669"/>
    <property type="project" value="TreeGrafter"/>
</dbReference>
<dbReference type="GO" id="GO:0006281">
    <property type="term" value="P:DNA repair"/>
    <property type="evidence" value="ECO:0007669"/>
    <property type="project" value="UniProtKB-UniRule"/>
</dbReference>
<dbReference type="CDD" id="cd06559">
    <property type="entry name" value="Endonuclease_V"/>
    <property type="match status" value="1"/>
</dbReference>
<dbReference type="FunFam" id="3.30.2170.10:FF:000001">
    <property type="entry name" value="Endonuclease V"/>
    <property type="match status" value="1"/>
</dbReference>
<dbReference type="Gene3D" id="3.30.2170.10">
    <property type="entry name" value="archaeoglobus fulgidus dsm 4304 superfamily"/>
    <property type="match status" value="1"/>
</dbReference>
<dbReference type="HAMAP" id="MF_00801">
    <property type="entry name" value="Endonuclease_5"/>
    <property type="match status" value="1"/>
</dbReference>
<dbReference type="InterPro" id="IPR007581">
    <property type="entry name" value="Endonuclease-V"/>
</dbReference>
<dbReference type="NCBIfam" id="NF008629">
    <property type="entry name" value="PRK11617.1"/>
    <property type="match status" value="1"/>
</dbReference>
<dbReference type="PANTHER" id="PTHR28511">
    <property type="entry name" value="ENDONUCLEASE V"/>
    <property type="match status" value="1"/>
</dbReference>
<dbReference type="PANTHER" id="PTHR28511:SF1">
    <property type="entry name" value="ENDONUCLEASE V"/>
    <property type="match status" value="1"/>
</dbReference>
<dbReference type="Pfam" id="PF04493">
    <property type="entry name" value="Endonuclease_5"/>
    <property type="match status" value="1"/>
</dbReference>
<keyword id="KW-0963">Cytoplasm</keyword>
<keyword id="KW-0227">DNA damage</keyword>
<keyword id="KW-0234">DNA repair</keyword>
<keyword id="KW-0255">Endonuclease</keyword>
<keyword id="KW-0378">Hydrolase</keyword>
<keyword id="KW-0460">Magnesium</keyword>
<keyword id="KW-0479">Metal-binding</keyword>
<keyword id="KW-0540">Nuclease</keyword>